<name>YIDD_NEIMA</name>
<dbReference type="EMBL" id="AL157959">
    <property type="protein sequence ID" value="CAM07825.1"/>
    <property type="status" value="ALT_INIT"/>
    <property type="molecule type" value="Genomic_DNA"/>
</dbReference>
<dbReference type="EnsemblBacteria" id="CAM07825">
    <property type="protein sequence ID" value="CAM07825"/>
    <property type="gene ID" value="NMA0549"/>
</dbReference>
<dbReference type="KEGG" id="nma:NMA0549"/>
<dbReference type="HOGENOM" id="CLU_144811_6_1_4"/>
<dbReference type="Proteomes" id="UP000000626">
    <property type="component" value="Chromosome"/>
</dbReference>
<dbReference type="GO" id="GO:0005886">
    <property type="term" value="C:plasma membrane"/>
    <property type="evidence" value="ECO:0007669"/>
    <property type="project" value="UniProtKB-SubCell"/>
</dbReference>
<dbReference type="HAMAP" id="MF_00386">
    <property type="entry name" value="UPF0161_YidD"/>
    <property type="match status" value="1"/>
</dbReference>
<dbReference type="InterPro" id="IPR002696">
    <property type="entry name" value="Membr_insert_effic_factor_YidD"/>
</dbReference>
<dbReference type="NCBIfam" id="TIGR00278">
    <property type="entry name" value="membrane protein insertion efficiency factor YidD"/>
    <property type="match status" value="1"/>
</dbReference>
<dbReference type="PANTHER" id="PTHR33383">
    <property type="entry name" value="MEMBRANE PROTEIN INSERTION EFFICIENCY FACTOR-RELATED"/>
    <property type="match status" value="1"/>
</dbReference>
<dbReference type="PANTHER" id="PTHR33383:SF1">
    <property type="entry name" value="MEMBRANE PROTEIN INSERTION EFFICIENCY FACTOR-RELATED"/>
    <property type="match status" value="1"/>
</dbReference>
<dbReference type="Pfam" id="PF01809">
    <property type="entry name" value="YidD"/>
    <property type="match status" value="1"/>
</dbReference>
<dbReference type="SMART" id="SM01234">
    <property type="entry name" value="Haemolytic"/>
    <property type="match status" value="1"/>
</dbReference>
<evidence type="ECO:0000255" key="1">
    <source>
        <dbReference type="HAMAP-Rule" id="MF_00386"/>
    </source>
</evidence>
<evidence type="ECO:0000305" key="2"/>
<accession>P67302</accession>
<accession>A1IQ00</accession>
<accession>Q9JW47</accession>
<accession>Q9JXS5</accession>
<keyword id="KW-0997">Cell inner membrane</keyword>
<keyword id="KW-1003">Cell membrane</keyword>
<keyword id="KW-0472">Membrane</keyword>
<proteinExistence type="inferred from homology"/>
<feature type="chain" id="PRO_0000171843" description="Putative membrane protein insertion efficiency factor">
    <location>
        <begin position="1"/>
        <end position="73"/>
    </location>
</feature>
<gene>
    <name type="ordered locus">NMA0549</name>
</gene>
<comment type="function">
    <text evidence="1">Could be involved in insertion of integral membrane proteins into the membrane.</text>
</comment>
<comment type="subcellular location">
    <subcellularLocation>
        <location evidence="1">Cell inner membrane</location>
        <topology evidence="1">Peripheral membrane protein</topology>
        <orientation evidence="1">Cytoplasmic side</orientation>
    </subcellularLocation>
</comment>
<comment type="similarity">
    <text evidence="1">Belongs to the UPF0161 family.</text>
</comment>
<comment type="sequence caution" evidence="2">
    <conflict type="erroneous initiation">
        <sequence resource="EMBL-CDS" id="CAM07825"/>
    </conflict>
</comment>
<reference key="1">
    <citation type="journal article" date="2000" name="Nature">
        <title>Complete DNA sequence of a serogroup A strain of Neisseria meningitidis Z2491.</title>
        <authorList>
            <person name="Parkhill J."/>
            <person name="Achtman M."/>
            <person name="James K.D."/>
            <person name="Bentley S.D."/>
            <person name="Churcher C.M."/>
            <person name="Klee S.R."/>
            <person name="Morelli G."/>
            <person name="Basham D."/>
            <person name="Brown D."/>
            <person name="Chillingworth T."/>
            <person name="Davies R.M."/>
            <person name="Davis P."/>
            <person name="Devlin K."/>
            <person name="Feltwell T."/>
            <person name="Hamlin N."/>
            <person name="Holroyd S."/>
            <person name="Jagels K."/>
            <person name="Leather S."/>
            <person name="Moule S."/>
            <person name="Mungall K.L."/>
            <person name="Quail M.A."/>
            <person name="Rajandream M.A."/>
            <person name="Rutherford K.M."/>
            <person name="Simmonds M."/>
            <person name="Skelton J."/>
            <person name="Whitehead S."/>
            <person name="Spratt B.G."/>
            <person name="Barrell B.G."/>
        </authorList>
    </citation>
    <scope>NUCLEOTIDE SEQUENCE [LARGE SCALE GENOMIC DNA]</scope>
    <source>
        <strain>DSM 15465 / Z2491</strain>
    </source>
</reference>
<organism>
    <name type="scientific">Neisseria meningitidis serogroup A / serotype 4A (strain DSM 15465 / Z2491)</name>
    <dbReference type="NCBI Taxonomy" id="122587"/>
    <lineage>
        <taxon>Bacteria</taxon>
        <taxon>Pseudomonadati</taxon>
        <taxon>Pseudomonadota</taxon>
        <taxon>Betaproteobacteria</taxon>
        <taxon>Neisseriales</taxon>
        <taxon>Neisseriaceae</taxon>
        <taxon>Neisseria</taxon>
    </lineage>
</organism>
<sequence length="73" mass="8237">MNFLLSKLLLGLIRFYQYCISPLIPPRCRYTPTCSQYAVEAVKKYGAFKGGRLAIKRIARCHPFGGHGHDPVP</sequence>
<protein>
    <recommendedName>
        <fullName evidence="1">Putative membrane protein insertion efficiency factor</fullName>
    </recommendedName>
</protein>